<feature type="chain" id="PRO_0000364331" description="Eukaryotic translation initiation factor 3 subunit F">
    <location>
        <begin position="1"/>
        <end position="300"/>
    </location>
</feature>
<feature type="domain" description="MPN" evidence="2">
    <location>
        <begin position="33"/>
        <end position="169"/>
    </location>
</feature>
<gene>
    <name type="ORF">MGL_1945</name>
</gene>
<proteinExistence type="inferred from homology"/>
<protein>
    <recommendedName>
        <fullName evidence="1">Eukaryotic translation initiation factor 3 subunit F</fullName>
        <shortName evidence="1">eIF3f</shortName>
    </recommendedName>
</protein>
<organism>
    <name type="scientific">Malassezia globosa (strain ATCC MYA-4612 / CBS 7966)</name>
    <name type="common">Dandruff-associated fungus</name>
    <dbReference type="NCBI Taxonomy" id="425265"/>
    <lineage>
        <taxon>Eukaryota</taxon>
        <taxon>Fungi</taxon>
        <taxon>Dikarya</taxon>
        <taxon>Basidiomycota</taxon>
        <taxon>Ustilaginomycotina</taxon>
        <taxon>Malasseziomycetes</taxon>
        <taxon>Malasseziales</taxon>
        <taxon>Malasseziaceae</taxon>
        <taxon>Malassezia</taxon>
    </lineage>
</organism>
<comment type="function">
    <text evidence="1">Component of the eukaryotic translation initiation factor 3 (eIF-3) complex, which is involved in protein synthesis of a specialized repertoire of mRNAs and, together with other initiation factors, stimulates binding of mRNA and methionyl-tRNAi to the 40S ribosome. The eIF-3 complex specifically targets and initiates translation of a subset of mRNAs involved in cell proliferation.</text>
</comment>
<comment type="subunit">
    <text evidence="1">Component of the eukaryotic translation initiation factor 3 (eIF-3) complex.</text>
</comment>
<comment type="subcellular location">
    <subcellularLocation>
        <location evidence="1">Cytoplasm</location>
    </subcellularLocation>
</comment>
<comment type="similarity">
    <text evidence="1">Belongs to the eIF-3 subunit F family.</text>
</comment>
<evidence type="ECO:0000255" key="1">
    <source>
        <dbReference type="HAMAP-Rule" id="MF_03005"/>
    </source>
</evidence>
<evidence type="ECO:0000255" key="2">
    <source>
        <dbReference type="PROSITE-ProRule" id="PRU01182"/>
    </source>
</evidence>
<accession>A8PZS4</accession>
<reference key="1">
    <citation type="journal article" date="2007" name="Proc. Natl. Acad. Sci. U.S.A.">
        <title>Dandruff-associated Malassezia genomes reveal convergent and divergent virulence traits shared with plant and human fungal pathogens.</title>
        <authorList>
            <person name="Xu J."/>
            <person name="Saunders C.W."/>
            <person name="Hu P."/>
            <person name="Grant R.A."/>
            <person name="Boekhout T."/>
            <person name="Kuramae E.E."/>
            <person name="Kronstad J.W."/>
            <person name="DeAngelis Y.M."/>
            <person name="Reeder N.L."/>
            <person name="Johnstone K.R."/>
            <person name="Leland M."/>
            <person name="Fieno A.M."/>
            <person name="Begley W.M."/>
            <person name="Sun Y."/>
            <person name="Lacey M.P."/>
            <person name="Chaudhary T."/>
            <person name="Keough T."/>
            <person name="Chu L."/>
            <person name="Sears R."/>
            <person name="Yuan B."/>
            <person name="Dawson T.L. Jr."/>
        </authorList>
    </citation>
    <scope>NUCLEOTIDE SEQUENCE [LARGE SCALE GENOMIC DNA]</scope>
    <source>
        <strain>ATCC MYA-4612 / CBS 7966</strain>
    </source>
</reference>
<sequence length="300" mass="32934">MAEKSTLAASSALHLSFPPAASGVFHSRSITAVKVHPVALFSILDHYLRRDVSQPRVIGTLLGTRSESEVEVRNAFAVPHGESQDPWQIHLDAEHHRRMLDLHLRVRPDEVVLGWYSTNTELNSNSALIQDHYSRETAPHQAIHLTLNTNVADEANGLGVQCYVSALLGAMAKPEDCAFLSLPTHLLMSTPEQTALRHLAAPKPQNITDLDALKASLEDVQAKLDRVLTYVRRVLAGEVEGDKAVGRYLSDTIGVVPAGLDESLLESLFQSHLQDVFMVSYLSKLVSAQAEMSTRLVLLT</sequence>
<keyword id="KW-0963">Cytoplasm</keyword>
<keyword id="KW-0396">Initiation factor</keyword>
<keyword id="KW-0648">Protein biosynthesis</keyword>
<keyword id="KW-1185">Reference proteome</keyword>
<dbReference type="EMBL" id="AAYY01000006">
    <property type="protein sequence ID" value="EDP43732.1"/>
    <property type="molecule type" value="Genomic_DNA"/>
</dbReference>
<dbReference type="RefSeq" id="XP_001730946.1">
    <property type="nucleotide sequence ID" value="XM_001730894.1"/>
</dbReference>
<dbReference type="SMR" id="A8PZS4"/>
<dbReference type="FunCoup" id="A8PZS4">
    <property type="interactions" value="653"/>
</dbReference>
<dbReference type="STRING" id="425265.A8PZS4"/>
<dbReference type="GeneID" id="5855253"/>
<dbReference type="KEGG" id="mgl:MGL_1945"/>
<dbReference type="VEuPathDB" id="FungiDB:MGL_1945"/>
<dbReference type="InParanoid" id="A8PZS4"/>
<dbReference type="OMA" id="EYFVHFH"/>
<dbReference type="OrthoDB" id="25498at2759"/>
<dbReference type="Proteomes" id="UP000008837">
    <property type="component" value="Unassembled WGS sequence"/>
</dbReference>
<dbReference type="GO" id="GO:0016282">
    <property type="term" value="C:eukaryotic 43S preinitiation complex"/>
    <property type="evidence" value="ECO:0007669"/>
    <property type="project" value="UniProtKB-UniRule"/>
</dbReference>
<dbReference type="GO" id="GO:0033290">
    <property type="term" value="C:eukaryotic 48S preinitiation complex"/>
    <property type="evidence" value="ECO:0007669"/>
    <property type="project" value="UniProtKB-UniRule"/>
</dbReference>
<dbReference type="GO" id="GO:0071541">
    <property type="term" value="C:eukaryotic translation initiation factor 3 complex, eIF3m"/>
    <property type="evidence" value="ECO:0007669"/>
    <property type="project" value="TreeGrafter"/>
</dbReference>
<dbReference type="GO" id="GO:0008237">
    <property type="term" value="F:metallopeptidase activity"/>
    <property type="evidence" value="ECO:0007669"/>
    <property type="project" value="InterPro"/>
</dbReference>
<dbReference type="GO" id="GO:0003743">
    <property type="term" value="F:translation initiation factor activity"/>
    <property type="evidence" value="ECO:0007669"/>
    <property type="project" value="UniProtKB-UniRule"/>
</dbReference>
<dbReference type="GO" id="GO:0031369">
    <property type="term" value="F:translation initiation factor binding"/>
    <property type="evidence" value="ECO:0007669"/>
    <property type="project" value="InterPro"/>
</dbReference>
<dbReference type="GO" id="GO:0001732">
    <property type="term" value="P:formation of cytoplasmic translation initiation complex"/>
    <property type="evidence" value="ECO:0007669"/>
    <property type="project" value="UniProtKB-UniRule"/>
</dbReference>
<dbReference type="CDD" id="cd08064">
    <property type="entry name" value="MPN_eIF3f"/>
    <property type="match status" value="1"/>
</dbReference>
<dbReference type="Gene3D" id="3.40.140.10">
    <property type="entry name" value="Cytidine Deaminase, domain 2"/>
    <property type="match status" value="1"/>
</dbReference>
<dbReference type="HAMAP" id="MF_03005">
    <property type="entry name" value="eIF3f"/>
    <property type="match status" value="1"/>
</dbReference>
<dbReference type="InterPro" id="IPR027531">
    <property type="entry name" value="eIF3f"/>
</dbReference>
<dbReference type="InterPro" id="IPR024969">
    <property type="entry name" value="EIF3F/CSN6-like_C"/>
</dbReference>
<dbReference type="InterPro" id="IPR000555">
    <property type="entry name" value="JAMM/MPN+_dom"/>
</dbReference>
<dbReference type="InterPro" id="IPR037518">
    <property type="entry name" value="MPN"/>
</dbReference>
<dbReference type="PANTHER" id="PTHR10540:SF6">
    <property type="entry name" value="EUKARYOTIC TRANSLATION INITIATION FACTOR 3 SUBUNIT F"/>
    <property type="match status" value="1"/>
</dbReference>
<dbReference type="PANTHER" id="PTHR10540">
    <property type="entry name" value="EUKARYOTIC TRANSLATION INITIATION FACTOR 3 SUBUNIT F-RELATED"/>
    <property type="match status" value="1"/>
</dbReference>
<dbReference type="Pfam" id="PF01398">
    <property type="entry name" value="JAB"/>
    <property type="match status" value="1"/>
</dbReference>
<dbReference type="Pfam" id="PF13012">
    <property type="entry name" value="MitMem_reg"/>
    <property type="match status" value="1"/>
</dbReference>
<dbReference type="SMART" id="SM00232">
    <property type="entry name" value="JAB_MPN"/>
    <property type="match status" value="1"/>
</dbReference>
<dbReference type="PROSITE" id="PS50249">
    <property type="entry name" value="MPN"/>
    <property type="match status" value="1"/>
</dbReference>
<name>EIF3F_MALGO</name>